<name>BPT_BRASB</name>
<keyword id="KW-0012">Acyltransferase</keyword>
<keyword id="KW-0963">Cytoplasm</keyword>
<keyword id="KW-1185">Reference proteome</keyword>
<keyword id="KW-0808">Transferase</keyword>
<feature type="chain" id="PRO_1000045121" description="Aspartate/glutamate leucyltransferase">
    <location>
        <begin position="1"/>
        <end position="258"/>
    </location>
</feature>
<accession>A5EKJ1</accession>
<sequence length="258" mass="29440">MTQHSRDTPQFYLTAPSPCPYLPGRQERKVFTHLVGDKATDLNDLLTHGGFRRSQSIAYRPACDQCRACVSVRVIANEFRPSRNFRKVLARNSDLVGEQRSAVPTSEQYSIFRSYLDQRHRHGGMADMTVLDYAMMVEDSHVETRIIEYRRRNLSNGPNARGGELIAVALTDVLSDGLSMVYSFFDPSETTRSLGTFMILDHIARARRQGLPYVYLGYWIEGSKKMDYKSRYLPQQRLAAAGWLRVDDEGHTAPEPQE</sequence>
<organism>
    <name type="scientific">Bradyrhizobium sp. (strain BTAi1 / ATCC BAA-1182)</name>
    <dbReference type="NCBI Taxonomy" id="288000"/>
    <lineage>
        <taxon>Bacteria</taxon>
        <taxon>Pseudomonadati</taxon>
        <taxon>Pseudomonadota</taxon>
        <taxon>Alphaproteobacteria</taxon>
        <taxon>Hyphomicrobiales</taxon>
        <taxon>Nitrobacteraceae</taxon>
        <taxon>Bradyrhizobium</taxon>
    </lineage>
</organism>
<protein>
    <recommendedName>
        <fullName evidence="1">Aspartate/glutamate leucyltransferase</fullName>
        <ecNumber evidence="1">2.3.2.29</ecNumber>
    </recommendedName>
</protein>
<reference key="1">
    <citation type="journal article" date="2007" name="Science">
        <title>Legumes symbioses: absence of nod genes in photosynthetic bradyrhizobia.</title>
        <authorList>
            <person name="Giraud E."/>
            <person name="Moulin L."/>
            <person name="Vallenet D."/>
            <person name="Barbe V."/>
            <person name="Cytryn E."/>
            <person name="Avarre J.-C."/>
            <person name="Jaubert M."/>
            <person name="Simon D."/>
            <person name="Cartieaux F."/>
            <person name="Prin Y."/>
            <person name="Bena G."/>
            <person name="Hannibal L."/>
            <person name="Fardoux J."/>
            <person name="Kojadinovic M."/>
            <person name="Vuillet L."/>
            <person name="Lajus A."/>
            <person name="Cruveiller S."/>
            <person name="Rouy Z."/>
            <person name="Mangenot S."/>
            <person name="Segurens B."/>
            <person name="Dossat C."/>
            <person name="Franck W.L."/>
            <person name="Chang W.-S."/>
            <person name="Saunders E."/>
            <person name="Bruce D."/>
            <person name="Richardson P."/>
            <person name="Normand P."/>
            <person name="Dreyfus B."/>
            <person name="Pignol D."/>
            <person name="Stacey G."/>
            <person name="Emerich D."/>
            <person name="Vermeglio A."/>
            <person name="Medigue C."/>
            <person name="Sadowsky M."/>
        </authorList>
    </citation>
    <scope>NUCLEOTIDE SEQUENCE [LARGE SCALE GENOMIC DNA]</scope>
    <source>
        <strain>BTAi1 / ATCC BAA-1182</strain>
    </source>
</reference>
<gene>
    <name evidence="1" type="primary">bpt</name>
    <name type="ordered locus">BBta_4657</name>
</gene>
<evidence type="ECO:0000255" key="1">
    <source>
        <dbReference type="HAMAP-Rule" id="MF_00689"/>
    </source>
</evidence>
<proteinExistence type="inferred from homology"/>
<comment type="function">
    <text evidence="1">Functions in the N-end rule pathway of protein degradation where it conjugates Leu from its aminoacyl-tRNA to the N-termini of proteins containing an N-terminal aspartate or glutamate.</text>
</comment>
<comment type="catalytic activity">
    <reaction evidence="1">
        <text>N-terminal L-glutamyl-[protein] + L-leucyl-tRNA(Leu) = N-terminal L-leucyl-L-glutamyl-[protein] + tRNA(Leu) + H(+)</text>
        <dbReference type="Rhea" id="RHEA:50412"/>
        <dbReference type="Rhea" id="RHEA-COMP:9613"/>
        <dbReference type="Rhea" id="RHEA-COMP:9622"/>
        <dbReference type="Rhea" id="RHEA-COMP:12664"/>
        <dbReference type="Rhea" id="RHEA-COMP:12668"/>
        <dbReference type="ChEBI" id="CHEBI:15378"/>
        <dbReference type="ChEBI" id="CHEBI:64721"/>
        <dbReference type="ChEBI" id="CHEBI:78442"/>
        <dbReference type="ChEBI" id="CHEBI:78494"/>
        <dbReference type="ChEBI" id="CHEBI:133041"/>
        <dbReference type="EC" id="2.3.2.29"/>
    </reaction>
</comment>
<comment type="catalytic activity">
    <reaction evidence="1">
        <text>N-terminal L-aspartyl-[protein] + L-leucyl-tRNA(Leu) = N-terminal L-leucyl-L-aspartyl-[protein] + tRNA(Leu) + H(+)</text>
        <dbReference type="Rhea" id="RHEA:50420"/>
        <dbReference type="Rhea" id="RHEA-COMP:9613"/>
        <dbReference type="Rhea" id="RHEA-COMP:9622"/>
        <dbReference type="Rhea" id="RHEA-COMP:12669"/>
        <dbReference type="Rhea" id="RHEA-COMP:12674"/>
        <dbReference type="ChEBI" id="CHEBI:15378"/>
        <dbReference type="ChEBI" id="CHEBI:64720"/>
        <dbReference type="ChEBI" id="CHEBI:78442"/>
        <dbReference type="ChEBI" id="CHEBI:78494"/>
        <dbReference type="ChEBI" id="CHEBI:133042"/>
        <dbReference type="EC" id="2.3.2.29"/>
    </reaction>
</comment>
<comment type="subcellular location">
    <subcellularLocation>
        <location evidence="1">Cytoplasm</location>
    </subcellularLocation>
</comment>
<comment type="similarity">
    <text evidence="1">Belongs to the R-transferase family. Bpt subfamily.</text>
</comment>
<dbReference type="EC" id="2.3.2.29" evidence="1"/>
<dbReference type="EMBL" id="CP000494">
    <property type="protein sequence ID" value="ABQ36685.1"/>
    <property type="molecule type" value="Genomic_DNA"/>
</dbReference>
<dbReference type="RefSeq" id="WP_012044672.1">
    <property type="nucleotide sequence ID" value="NC_009485.1"/>
</dbReference>
<dbReference type="SMR" id="A5EKJ1"/>
<dbReference type="STRING" id="288000.BBta_4657"/>
<dbReference type="KEGG" id="bbt:BBta_4657"/>
<dbReference type="eggNOG" id="COG2935">
    <property type="taxonomic scope" value="Bacteria"/>
</dbReference>
<dbReference type="HOGENOM" id="CLU_077607_1_0_5"/>
<dbReference type="OrthoDB" id="9782022at2"/>
<dbReference type="Proteomes" id="UP000000246">
    <property type="component" value="Chromosome"/>
</dbReference>
<dbReference type="GO" id="GO:0005737">
    <property type="term" value="C:cytoplasm"/>
    <property type="evidence" value="ECO:0007669"/>
    <property type="project" value="UniProtKB-SubCell"/>
</dbReference>
<dbReference type="GO" id="GO:0004057">
    <property type="term" value="F:arginyl-tRNA--protein transferase activity"/>
    <property type="evidence" value="ECO:0007669"/>
    <property type="project" value="InterPro"/>
</dbReference>
<dbReference type="GO" id="GO:0008914">
    <property type="term" value="F:leucyl-tRNA--protein transferase activity"/>
    <property type="evidence" value="ECO:0007669"/>
    <property type="project" value="UniProtKB-UniRule"/>
</dbReference>
<dbReference type="GO" id="GO:0071596">
    <property type="term" value="P:ubiquitin-dependent protein catabolic process via the N-end rule pathway"/>
    <property type="evidence" value="ECO:0007669"/>
    <property type="project" value="InterPro"/>
</dbReference>
<dbReference type="HAMAP" id="MF_00689">
    <property type="entry name" value="Bpt"/>
    <property type="match status" value="1"/>
</dbReference>
<dbReference type="InterPro" id="IPR016181">
    <property type="entry name" value="Acyl_CoA_acyltransferase"/>
</dbReference>
<dbReference type="InterPro" id="IPR017138">
    <property type="entry name" value="Asp_Glu_LeuTrfase"/>
</dbReference>
<dbReference type="InterPro" id="IPR030700">
    <property type="entry name" value="N-end_Aminoacyl_Trfase"/>
</dbReference>
<dbReference type="InterPro" id="IPR007472">
    <property type="entry name" value="N-end_Aminoacyl_Trfase_C"/>
</dbReference>
<dbReference type="InterPro" id="IPR007471">
    <property type="entry name" value="N-end_Aminoacyl_Trfase_N"/>
</dbReference>
<dbReference type="NCBIfam" id="NF002341">
    <property type="entry name" value="PRK01305.1-1"/>
    <property type="match status" value="1"/>
</dbReference>
<dbReference type="NCBIfam" id="NF002342">
    <property type="entry name" value="PRK01305.1-3"/>
    <property type="match status" value="1"/>
</dbReference>
<dbReference type="NCBIfam" id="NF002343">
    <property type="entry name" value="PRK01305.1-4"/>
    <property type="match status" value="1"/>
</dbReference>
<dbReference type="NCBIfam" id="NF002346">
    <property type="entry name" value="PRK01305.2-3"/>
    <property type="match status" value="1"/>
</dbReference>
<dbReference type="PANTHER" id="PTHR21367">
    <property type="entry name" value="ARGININE-TRNA-PROTEIN TRANSFERASE 1"/>
    <property type="match status" value="1"/>
</dbReference>
<dbReference type="PANTHER" id="PTHR21367:SF1">
    <property type="entry name" value="ARGINYL-TRNA--PROTEIN TRANSFERASE 1"/>
    <property type="match status" value="1"/>
</dbReference>
<dbReference type="Pfam" id="PF04377">
    <property type="entry name" value="ATE_C"/>
    <property type="match status" value="1"/>
</dbReference>
<dbReference type="Pfam" id="PF04376">
    <property type="entry name" value="ATE_N"/>
    <property type="match status" value="1"/>
</dbReference>
<dbReference type="PIRSF" id="PIRSF037208">
    <property type="entry name" value="ATE_pro_prd"/>
    <property type="match status" value="1"/>
</dbReference>
<dbReference type="SUPFAM" id="SSF55729">
    <property type="entry name" value="Acyl-CoA N-acyltransferases (Nat)"/>
    <property type="match status" value="1"/>
</dbReference>